<keyword id="KW-0027">Amidation</keyword>
<keyword id="KW-0903">Direct protein sequencing</keyword>
<keyword id="KW-0527">Neuropeptide</keyword>
<keyword id="KW-0873">Pyrrolidone carboxylic acid</keyword>
<keyword id="KW-0964">Secreted</keyword>
<accession>P86663</accession>
<feature type="peptide" id="PRO_0000395573" description="Periviscerokinin-1" evidence="4">
    <location>
        <begin position="1"/>
        <end position="9"/>
    </location>
</feature>
<feature type="modified residue" description="Pyrrolidone carboxylic acid; partial" evidence="4">
    <location>
        <position position="1"/>
    </location>
</feature>
<feature type="modified residue" description="Valine amide" evidence="4">
    <location>
        <position position="9"/>
    </location>
</feature>
<feature type="unsure residue" description="L or I" evidence="4">
    <location>
        <position position="3"/>
    </location>
</feature>
<feature type="unsure residue" description="I or L" evidence="4">
    <location>
        <position position="4"/>
    </location>
</feature>
<reference evidence="6" key="1">
    <citation type="journal article" date="2010" name="Peptides">
        <title>CAPA-peptides of praying mantids (Mantodea).</title>
        <authorList>
            <person name="Koehler R."/>
            <person name="Predel R."/>
        </authorList>
    </citation>
    <scope>PROTEIN SEQUENCE</scope>
    <scope>MASS SPECTROMETRY</scope>
    <scope>PYROGLUTAMATE FORMATION AT GLN-1</scope>
    <scope>AMIDATION AT VAL-9</scope>
    <source>
        <tissue evidence="4">Abdominal perisympathetic organs</tissue>
    </source>
</reference>
<evidence type="ECO:0000250" key="1">
    <source>
        <dbReference type="UniProtKB" id="P83923"/>
    </source>
</evidence>
<evidence type="ECO:0000250" key="2">
    <source>
        <dbReference type="UniProtKB" id="P84375"/>
    </source>
</evidence>
<evidence type="ECO:0000255" key="3"/>
<evidence type="ECO:0000269" key="4">
    <source>
    </source>
</evidence>
<evidence type="ECO:0000303" key="5">
    <source>
    </source>
</evidence>
<evidence type="ECO:0000305" key="6"/>
<proteinExistence type="evidence at protein level"/>
<sequence length="9" mass="1026">QGLIPFPRV</sequence>
<comment type="function">
    <text evidence="1">Mediates visceral muscle contractile activity (myotropic activity).</text>
</comment>
<comment type="subcellular location">
    <subcellularLocation>
        <location evidence="2">Secreted</location>
    </subcellularLocation>
</comment>
<comment type="mass spectrometry" mass="1025.6" method="MALDI" evidence="4"/>
<comment type="mass spectrometry" mass="1008.6" method="MALDI" evidence="4">
    <text>With pyroglutamate at Gln-1.</text>
</comment>
<comment type="similarity">
    <text evidence="3">Belongs to the periviscerokinin family.</text>
</comment>
<organism>
    <name type="scientific">Paramantis sacra</name>
    <name type="common">Praying mantis</name>
    <dbReference type="NCBI Taxonomy" id="765343"/>
    <lineage>
        <taxon>Eukaryota</taxon>
        <taxon>Metazoa</taxon>
        <taxon>Ecdysozoa</taxon>
        <taxon>Arthropoda</taxon>
        <taxon>Hexapoda</taxon>
        <taxon>Insecta</taxon>
        <taxon>Pterygota</taxon>
        <taxon>Neoptera</taxon>
        <taxon>Polyneoptera</taxon>
        <taxon>Dictyoptera</taxon>
        <taxon>Mantodea</taxon>
        <taxon>Eumantodea</taxon>
        <taxon>Mantoidea</taxon>
        <taxon>Mantidae</taxon>
        <taxon>Tenoderinae</taxon>
        <taxon>Paramantini</taxon>
        <taxon>Paramantis</taxon>
    </lineage>
</organism>
<dbReference type="GO" id="GO:0005576">
    <property type="term" value="C:extracellular region"/>
    <property type="evidence" value="ECO:0007669"/>
    <property type="project" value="UniProtKB-SubCell"/>
</dbReference>
<dbReference type="GO" id="GO:0007218">
    <property type="term" value="P:neuropeptide signaling pathway"/>
    <property type="evidence" value="ECO:0007669"/>
    <property type="project" value="UniProtKB-KW"/>
</dbReference>
<dbReference type="InterPro" id="IPR013231">
    <property type="entry name" value="Periviscerokinin"/>
</dbReference>
<dbReference type="Pfam" id="PF08259">
    <property type="entry name" value="Periviscerokin"/>
    <property type="match status" value="1"/>
</dbReference>
<protein>
    <recommendedName>
        <fullName evidence="5">Periviscerokinin-1</fullName>
    </recommendedName>
</protein>
<name>PVK1_PARSA</name>